<organism>
    <name type="scientific">Mycobacterium tuberculosis (strain CDC 1551 / Oshkosh)</name>
    <dbReference type="NCBI Taxonomy" id="83331"/>
    <lineage>
        <taxon>Bacteria</taxon>
        <taxon>Bacillati</taxon>
        <taxon>Actinomycetota</taxon>
        <taxon>Actinomycetes</taxon>
        <taxon>Mycobacteriales</taxon>
        <taxon>Mycobacteriaceae</taxon>
        <taxon>Mycobacterium</taxon>
        <taxon>Mycobacterium tuberculosis complex</taxon>
    </lineage>
</organism>
<proteinExistence type="inferred from homology"/>
<reference key="1">
    <citation type="journal article" date="2002" name="J. Bacteriol.">
        <title>Whole-genome comparison of Mycobacterium tuberculosis clinical and laboratory strains.</title>
        <authorList>
            <person name="Fleischmann R.D."/>
            <person name="Alland D."/>
            <person name="Eisen J.A."/>
            <person name="Carpenter L."/>
            <person name="White O."/>
            <person name="Peterson J.D."/>
            <person name="DeBoy R.T."/>
            <person name="Dodson R.J."/>
            <person name="Gwinn M.L."/>
            <person name="Haft D.H."/>
            <person name="Hickey E.K."/>
            <person name="Kolonay J.F."/>
            <person name="Nelson W.C."/>
            <person name="Umayam L.A."/>
            <person name="Ermolaeva M.D."/>
            <person name="Salzberg S.L."/>
            <person name="Delcher A."/>
            <person name="Utterback T.R."/>
            <person name="Weidman J.F."/>
            <person name="Khouri H.M."/>
            <person name="Gill J."/>
            <person name="Mikula A."/>
            <person name="Bishai W."/>
            <person name="Jacobs W.R. Jr."/>
            <person name="Venter J.C."/>
            <person name="Fraser C.M."/>
        </authorList>
    </citation>
    <scope>NUCLEOTIDE SEQUENCE [LARGE SCALE GENOMIC DNA]</scope>
    <source>
        <strain>CDC 1551 / Oshkosh</strain>
    </source>
</reference>
<comment type="function">
    <text evidence="1">Component of a biotin-dependent acyl-CoA carboxylase complex. This subunit transfers the CO2 from carboxybiotin to the CoA ester substrate. When associated with the alpha3 subunit AccA3, is involved in the carboxylation of acetyl-CoA and propionyl-CoA.</text>
</comment>
<comment type="catalytic activity">
    <reaction evidence="1">
        <text>N(6)-carboxybiotinyl-L-lysyl-[protein] + acetyl-CoA = N(6)-biotinyl-L-lysyl-[protein] + malonyl-CoA</text>
        <dbReference type="Rhea" id="RHEA:54728"/>
        <dbReference type="Rhea" id="RHEA-COMP:10505"/>
        <dbReference type="Rhea" id="RHEA-COMP:10506"/>
        <dbReference type="ChEBI" id="CHEBI:57288"/>
        <dbReference type="ChEBI" id="CHEBI:57384"/>
        <dbReference type="ChEBI" id="CHEBI:83144"/>
        <dbReference type="ChEBI" id="CHEBI:83145"/>
        <dbReference type="EC" id="2.1.3.15"/>
    </reaction>
    <physiologicalReaction direction="left-to-right" evidence="1">
        <dbReference type="Rhea" id="RHEA:54729"/>
    </physiologicalReaction>
</comment>
<comment type="catalytic activity">
    <reaction evidence="1">
        <text>N(6)-carboxybiotinyl-L-lysyl-[protein] + propanoyl-CoA = methylmalonyl-CoA + N(6)-biotinyl-L-lysyl-[protein]</text>
        <dbReference type="Rhea" id="RHEA:66612"/>
        <dbReference type="Rhea" id="RHEA-COMP:10505"/>
        <dbReference type="Rhea" id="RHEA-COMP:10506"/>
        <dbReference type="ChEBI" id="CHEBI:57392"/>
        <dbReference type="ChEBI" id="CHEBI:59916"/>
        <dbReference type="ChEBI" id="CHEBI:83144"/>
        <dbReference type="ChEBI" id="CHEBI:83145"/>
    </reaction>
    <physiologicalReaction direction="left-to-right" evidence="1">
        <dbReference type="Rhea" id="RHEA:66613"/>
    </physiologicalReaction>
</comment>
<comment type="pathway">
    <text evidence="1">Lipid metabolism; mycolic acid biosynthesis.</text>
</comment>
<comment type="subunit">
    <text evidence="1">The biotin-dependent acyl-CoA carboxylase complex is composed of AccA3, which contains the biotin carboxylase (BC) and biotin carboxyl carrier protein (BCCP) domains, and AccD5, which contains the carboxyl transferase (CT) domain.</text>
</comment>
<comment type="similarity">
    <text evidence="5">Belongs to the AccD/PCCB family.</text>
</comment>
<gene>
    <name type="primary">accD5</name>
    <name type="synonym">pccB</name>
    <name type="ordered locus">MT3379.1</name>
</gene>
<keyword id="KW-1185">Reference proteome</keyword>
<keyword id="KW-0808">Transferase</keyword>
<feature type="chain" id="PRO_0000426774" description="Biotin-dependent acetyl-/propionyl-coenzyme A carboxylase beta5 subunit">
    <location>
        <begin position="1"/>
        <end position="548"/>
    </location>
</feature>
<feature type="domain" description="CoA carboxyltransferase N-terminal" evidence="2">
    <location>
        <begin position="25"/>
        <end position="281"/>
    </location>
</feature>
<feature type="domain" description="CoA carboxyltransferase C-terminal" evidence="3">
    <location>
        <begin position="295"/>
        <end position="541"/>
    </location>
</feature>
<feature type="region of interest" description="Disordered" evidence="4">
    <location>
        <begin position="1"/>
        <end position="23"/>
    </location>
</feature>
<feature type="compositionally biased region" description="Basic and acidic residues" evidence="4">
    <location>
        <begin position="7"/>
        <end position="21"/>
    </location>
</feature>
<dbReference type="EC" id="2.1.3.15" evidence="1"/>
<dbReference type="EC" id="2.1.3.-" evidence="1"/>
<dbReference type="EMBL" id="AE000516">
    <property type="protein sequence ID" value="AAK47722.1"/>
    <property type="molecule type" value="Genomic_DNA"/>
</dbReference>
<dbReference type="PIR" id="A70980">
    <property type="entry name" value="A70980"/>
</dbReference>
<dbReference type="RefSeq" id="WP_003917758.1">
    <property type="nucleotide sequence ID" value="NZ_KK341227.1"/>
</dbReference>
<dbReference type="SMR" id="P9WQH6"/>
<dbReference type="KEGG" id="mtc:MT3379.1"/>
<dbReference type="PATRIC" id="fig|83331.31.peg.3637"/>
<dbReference type="HOGENOM" id="CLU_018822_6_2_11"/>
<dbReference type="UniPathway" id="UPA00915"/>
<dbReference type="Proteomes" id="UP000001020">
    <property type="component" value="Chromosome"/>
</dbReference>
<dbReference type="GO" id="GO:0009317">
    <property type="term" value="C:acetyl-CoA carboxylase complex"/>
    <property type="evidence" value="ECO:0007669"/>
    <property type="project" value="TreeGrafter"/>
</dbReference>
<dbReference type="GO" id="GO:0004658">
    <property type="term" value="F:propionyl-CoA carboxylase activity"/>
    <property type="evidence" value="ECO:0007669"/>
    <property type="project" value="TreeGrafter"/>
</dbReference>
<dbReference type="GO" id="GO:0016740">
    <property type="term" value="F:transferase activity"/>
    <property type="evidence" value="ECO:0007669"/>
    <property type="project" value="UniProtKB-KW"/>
</dbReference>
<dbReference type="FunFam" id="3.90.226.10:FF:000017">
    <property type="entry name" value="Propionyl-CoA carboxylase subunit beta 5"/>
    <property type="match status" value="1"/>
</dbReference>
<dbReference type="FunFam" id="3.90.226.10:FF:000016">
    <property type="entry name" value="Propionyl-CoA carboxylase, beta subunit"/>
    <property type="match status" value="1"/>
</dbReference>
<dbReference type="Gene3D" id="3.90.226.10">
    <property type="entry name" value="2-enoyl-CoA Hydratase, Chain A, domain 1"/>
    <property type="match status" value="2"/>
</dbReference>
<dbReference type="InterPro" id="IPR051047">
    <property type="entry name" value="AccD/PCCB"/>
</dbReference>
<dbReference type="InterPro" id="IPR034733">
    <property type="entry name" value="AcCoA_carboxyl_beta"/>
</dbReference>
<dbReference type="InterPro" id="IPR029045">
    <property type="entry name" value="ClpP/crotonase-like_dom_sf"/>
</dbReference>
<dbReference type="InterPro" id="IPR011763">
    <property type="entry name" value="COA_CT_C"/>
</dbReference>
<dbReference type="InterPro" id="IPR011762">
    <property type="entry name" value="COA_CT_N"/>
</dbReference>
<dbReference type="PANTHER" id="PTHR43842">
    <property type="entry name" value="PROPIONYL-COA CARBOXYLASE BETA CHAIN"/>
    <property type="match status" value="1"/>
</dbReference>
<dbReference type="PANTHER" id="PTHR43842:SF2">
    <property type="entry name" value="PROPIONYL-COA CARBOXYLASE BETA CHAIN, MITOCHONDRIAL"/>
    <property type="match status" value="1"/>
</dbReference>
<dbReference type="Pfam" id="PF01039">
    <property type="entry name" value="Carboxyl_trans"/>
    <property type="match status" value="1"/>
</dbReference>
<dbReference type="SUPFAM" id="SSF52096">
    <property type="entry name" value="ClpP/crotonase"/>
    <property type="match status" value="2"/>
</dbReference>
<dbReference type="PROSITE" id="PS50989">
    <property type="entry name" value="COA_CT_CTER"/>
    <property type="match status" value="1"/>
</dbReference>
<dbReference type="PROSITE" id="PS50980">
    <property type="entry name" value="COA_CT_NTER"/>
    <property type="match status" value="1"/>
</dbReference>
<evidence type="ECO:0000250" key="1">
    <source>
        <dbReference type="UniProtKB" id="P9WQH7"/>
    </source>
</evidence>
<evidence type="ECO:0000255" key="2">
    <source>
        <dbReference type="PROSITE-ProRule" id="PRU01136"/>
    </source>
</evidence>
<evidence type="ECO:0000255" key="3">
    <source>
        <dbReference type="PROSITE-ProRule" id="PRU01137"/>
    </source>
</evidence>
<evidence type="ECO:0000256" key="4">
    <source>
        <dbReference type="SAM" id="MobiDB-lite"/>
    </source>
</evidence>
<evidence type="ECO:0000305" key="5"/>
<sequence>MTSVTDRSAHSAERSTEHTIDIHTTAGKLAELHKRREESLHPVGEDAVEKVHAKGKLTARERIYALLDEDSFVELDALAKHRSTNFNLGEKRPLGDGVVTGYGTIDGRDVCIFSQDATVFGGSLGEVYGEKIVKVQELAIKTGRPLIGINDGAGARIQEGVVSLGLYSRIFRNNILASGVIPQISLIMGAAAGGHVYSPALTDFVIMVDQTSQMFITGPDVIKTVTGEEVTMEELGGAHTHMAKSGTAHYAASGEQDAFDYVRELLSYLPPNNSTDAPRYQAAAPTGPIEENLTDEDLELDTLIPDSPNQPYDMHEVITRLLDDEFLEIQAGYAQNIVVGFGRIGGRPVGIVANQPTHFAGCLDINASEKAARFVRTCDCFNIPIVMLVDVPGFLPGTDQEYNGIIRRGAKLLYAYGEATVPKITVITRKAYGGAYCVMGSKDMGCDVNLAWPTAQIAVMGASGAVGFVYRQQLAEAAANGEDIDKLRLRLQQEYEDTLVNPYVAAERGYVDAVIPPSHTRGYIGTALRLLERKIAQLPPKKHGNVPL</sequence>
<name>ACCD5_MYCTO</name>
<accession>P9WQH6</accession>
<accession>L0TF57</accession>
<accession>P96885</accession>
<protein>
    <recommendedName>
        <fullName evidence="1">Biotin-dependent acetyl-/propionyl-coenzyme A carboxylase beta5 subunit</fullName>
    </recommendedName>
    <alternativeName>
        <fullName evidence="1">Acetyl-CoA carboxylase</fullName>
        <shortName evidence="1">ACC</shortName>
        <ecNumber evidence="1">2.1.3.15</ecNumber>
    </alternativeName>
    <alternativeName>
        <fullName evidence="1">Propionyl-CoA carboxylase</fullName>
        <shortName evidence="1">PCC</shortName>
        <ecNumber evidence="1">2.1.3.-</ecNumber>
    </alternativeName>
</protein>